<comment type="function">
    <text evidence="1">Insulin decreases blood glucose concentration. It increases cell permeability to monosaccharides, amino acids and fatty acids. It accelerates glycolysis, the pentose phosphate cycle, and glycogen synthesis in liver (By similarity).</text>
</comment>
<comment type="subunit">
    <text evidence="1">Heterodimer of a B chain and an A chain linked by two disulfide bonds.</text>
</comment>
<comment type="subcellular location">
    <subcellularLocation>
        <location evidence="1">Secreted</location>
    </subcellularLocation>
</comment>
<comment type="similarity">
    <text evidence="3">Belongs to the insulin family.</text>
</comment>
<protein>
    <recommendedName>
        <fullName evidence="5">Insulin-2</fullName>
    </recommendedName>
    <component>
        <recommendedName>
            <fullName evidence="5">Insulin-2 B chain</fullName>
        </recommendedName>
    </component>
    <component>
        <recommendedName>
            <fullName evidence="5">Insulin-2 A chain</fullName>
        </recommendedName>
    </component>
</protein>
<reference evidence="6" key="1">
    <citation type="journal article" date="2000" name="Peptides">
        <title>Multiple molecular forms of glucagon and insulin in the kaluga sturgeon, Huso dauricus.</title>
        <authorList>
            <person name="Andoh T."/>
            <person name="Nagasawa H."/>
            <person name="Matsubara T."/>
        </authorList>
    </citation>
    <scope>PROTEIN SEQUENCE</scope>
    <source>
        <tissue evidence="4">Pancreas</tissue>
    </source>
</reference>
<organism>
    <name type="scientific">Huso dauricus</name>
    <name type="common">Kaluga sturgeon</name>
    <name type="synonym">Acipenser dauricus</name>
    <dbReference type="NCBI Taxonomy" id="55293"/>
    <lineage>
        <taxon>Eukaryota</taxon>
        <taxon>Metazoa</taxon>
        <taxon>Chordata</taxon>
        <taxon>Craniata</taxon>
        <taxon>Vertebrata</taxon>
        <taxon>Euteleostomi</taxon>
        <taxon>Actinopterygii</taxon>
        <taxon>Chondrostei</taxon>
        <taxon>Acipenseriformes</taxon>
        <taxon>Acipenseridae</taxon>
        <taxon>Huso</taxon>
    </lineage>
</organism>
<proteinExistence type="evidence at protein level"/>
<dbReference type="SMR" id="C0HJI8"/>
<dbReference type="GO" id="GO:0005615">
    <property type="term" value="C:extracellular space"/>
    <property type="evidence" value="ECO:0007669"/>
    <property type="project" value="TreeGrafter"/>
</dbReference>
<dbReference type="GO" id="GO:0005179">
    <property type="term" value="F:hormone activity"/>
    <property type="evidence" value="ECO:0007669"/>
    <property type="project" value="UniProtKB-KW"/>
</dbReference>
<dbReference type="GO" id="GO:0006006">
    <property type="term" value="P:glucose metabolic process"/>
    <property type="evidence" value="ECO:0007669"/>
    <property type="project" value="UniProtKB-KW"/>
</dbReference>
<dbReference type="CDD" id="cd04367">
    <property type="entry name" value="IlGF_insulin_like"/>
    <property type="match status" value="1"/>
</dbReference>
<dbReference type="Gene3D" id="1.10.100.10">
    <property type="entry name" value="Insulin-like"/>
    <property type="match status" value="2"/>
</dbReference>
<dbReference type="InterPro" id="IPR004825">
    <property type="entry name" value="Insulin"/>
</dbReference>
<dbReference type="InterPro" id="IPR016179">
    <property type="entry name" value="Insulin-like"/>
</dbReference>
<dbReference type="InterPro" id="IPR036438">
    <property type="entry name" value="Insulin-like_sf"/>
</dbReference>
<dbReference type="InterPro" id="IPR022353">
    <property type="entry name" value="Insulin_CS"/>
</dbReference>
<dbReference type="InterPro" id="IPR022352">
    <property type="entry name" value="Insulin_family"/>
</dbReference>
<dbReference type="PANTHER" id="PTHR11454:SF9">
    <property type="entry name" value="INSULIN"/>
    <property type="match status" value="1"/>
</dbReference>
<dbReference type="PANTHER" id="PTHR11454">
    <property type="entry name" value="INSULIN/INSULIN GROWTH FACTOR"/>
    <property type="match status" value="1"/>
</dbReference>
<dbReference type="Pfam" id="PF00049">
    <property type="entry name" value="Insulin"/>
    <property type="match status" value="2"/>
</dbReference>
<dbReference type="PRINTS" id="PR00277">
    <property type="entry name" value="INSULIN"/>
</dbReference>
<dbReference type="PRINTS" id="PR00276">
    <property type="entry name" value="INSULINFAMLY"/>
</dbReference>
<dbReference type="SMART" id="SM00078">
    <property type="entry name" value="IlGF"/>
    <property type="match status" value="1"/>
</dbReference>
<dbReference type="SUPFAM" id="SSF56994">
    <property type="entry name" value="Insulin-like"/>
    <property type="match status" value="1"/>
</dbReference>
<dbReference type="PROSITE" id="PS00262">
    <property type="entry name" value="INSULIN"/>
    <property type="match status" value="1"/>
</dbReference>
<name>INS2_HUSDA</name>
<accession>C0HJI8</accession>
<evidence type="ECO:0000250" key="1"/>
<evidence type="ECO:0000250" key="2">
    <source>
        <dbReference type="UniProtKB" id="P01339"/>
    </source>
</evidence>
<evidence type="ECO:0000255" key="3"/>
<evidence type="ECO:0000269" key="4">
    <source>
    </source>
</evidence>
<evidence type="ECO:0000303" key="5">
    <source>
    </source>
</evidence>
<evidence type="ECO:0000305" key="6"/>
<keyword id="KW-0119">Carbohydrate metabolism</keyword>
<keyword id="KW-0903">Direct protein sequencing</keyword>
<keyword id="KW-1015">Disulfide bond</keyword>
<keyword id="KW-0313">Glucose metabolism</keyword>
<keyword id="KW-0372">Hormone</keyword>
<keyword id="KW-0964">Secreted</keyword>
<sequence>AANQHLCGAHLVEALYLVCGERGFFYTPNKVGIVEQCCHSPCSLYDLENYCN</sequence>
<feature type="peptide" id="PRO_0000429386" description="Insulin-2 B chain" evidence="4">
    <location>
        <begin position="1"/>
        <end position="31"/>
    </location>
</feature>
<feature type="peptide" id="PRO_0000429387" description="Insulin-2 A chain" evidence="4">
    <location>
        <begin position="32"/>
        <end position="52"/>
    </location>
</feature>
<feature type="disulfide bond" description="Interchain (between B and A chains)" evidence="2">
    <location>
        <begin position="7"/>
        <end position="38"/>
    </location>
</feature>
<feature type="disulfide bond" description="Interchain (between B and A chains)" evidence="2">
    <location>
        <begin position="19"/>
        <end position="51"/>
    </location>
</feature>
<feature type="disulfide bond" evidence="2">
    <location>
        <begin position="37"/>
        <end position="42"/>
    </location>
</feature>
<feature type="non-consecutive residues" evidence="5">
    <location>
        <begin position="31"/>
        <end position="32"/>
    </location>
</feature>